<sequence length="106" mass="11361">MMIVTTDRIDGYNVKAVKGYVKGSTVQTKHIGRDITAGLKGLVGGEIKGYSEMMDEARKLAIHRMAQDAEAKGANAVIGFRLQTSTVMANAAEIIAYGTAVEVEKE</sequence>
<dbReference type="EMBL" id="BA000004">
    <property type="protein sequence ID" value="BAB04362.1"/>
    <property type="molecule type" value="Genomic_DNA"/>
</dbReference>
<dbReference type="PIR" id="C83730">
    <property type="entry name" value="C83730"/>
</dbReference>
<dbReference type="RefSeq" id="WP_010896819.1">
    <property type="nucleotide sequence ID" value="NC_002570.2"/>
</dbReference>
<dbReference type="SMR" id="Q9KF43"/>
<dbReference type="STRING" id="272558.gene:10726517"/>
<dbReference type="KEGG" id="bha:BH0643"/>
<dbReference type="eggNOG" id="COG0393">
    <property type="taxonomic scope" value="Bacteria"/>
</dbReference>
<dbReference type="HOGENOM" id="CLU_117144_1_3_9"/>
<dbReference type="OrthoDB" id="9796448at2"/>
<dbReference type="Proteomes" id="UP000001258">
    <property type="component" value="Chromosome"/>
</dbReference>
<dbReference type="Gene3D" id="3.30.110.70">
    <property type="entry name" value="Hypothetical protein apc22750. Chain B"/>
    <property type="match status" value="1"/>
</dbReference>
<dbReference type="HAMAP" id="MF_00338">
    <property type="entry name" value="UPF0145"/>
    <property type="match status" value="1"/>
</dbReference>
<dbReference type="InterPro" id="IPR035439">
    <property type="entry name" value="UPF0145_dom_sf"/>
</dbReference>
<dbReference type="InterPro" id="IPR002765">
    <property type="entry name" value="UPF0145_YbjQ-like"/>
</dbReference>
<dbReference type="PANTHER" id="PTHR34068:SF2">
    <property type="entry name" value="UPF0145 PROTEIN SCO3412"/>
    <property type="match status" value="1"/>
</dbReference>
<dbReference type="PANTHER" id="PTHR34068">
    <property type="entry name" value="UPF0145 PROTEIN YBJQ"/>
    <property type="match status" value="1"/>
</dbReference>
<dbReference type="Pfam" id="PF01906">
    <property type="entry name" value="YbjQ_1"/>
    <property type="match status" value="1"/>
</dbReference>
<dbReference type="SUPFAM" id="SSF117782">
    <property type="entry name" value="YbjQ-like"/>
    <property type="match status" value="1"/>
</dbReference>
<accession>Q9KF43</accession>
<feature type="chain" id="PRO_0000138458" description="UPF0145 protein BH0643">
    <location>
        <begin position="1"/>
        <end position="106"/>
    </location>
</feature>
<name>Y643_HALH5</name>
<comment type="similarity">
    <text evidence="1">Belongs to the UPF0145 family.</text>
</comment>
<reference key="1">
    <citation type="journal article" date="2000" name="Nucleic Acids Res.">
        <title>Complete genome sequence of the alkaliphilic bacterium Bacillus halodurans and genomic sequence comparison with Bacillus subtilis.</title>
        <authorList>
            <person name="Takami H."/>
            <person name="Nakasone K."/>
            <person name="Takaki Y."/>
            <person name="Maeno G."/>
            <person name="Sasaki R."/>
            <person name="Masui N."/>
            <person name="Fuji F."/>
            <person name="Hirama C."/>
            <person name="Nakamura Y."/>
            <person name="Ogasawara N."/>
            <person name="Kuhara S."/>
            <person name="Horikoshi K."/>
        </authorList>
    </citation>
    <scope>NUCLEOTIDE SEQUENCE [LARGE SCALE GENOMIC DNA]</scope>
    <source>
        <strain>ATCC BAA-125 / DSM 18197 / FERM 7344 / JCM 9153 / C-125</strain>
    </source>
</reference>
<protein>
    <recommendedName>
        <fullName>UPF0145 protein BH0643</fullName>
    </recommendedName>
</protein>
<evidence type="ECO:0000305" key="1"/>
<proteinExistence type="inferred from homology"/>
<gene>
    <name type="ordered locus">BH0643</name>
</gene>
<organism>
    <name type="scientific">Halalkalibacterium halodurans (strain ATCC BAA-125 / DSM 18197 / FERM 7344 / JCM 9153 / C-125)</name>
    <name type="common">Bacillus halodurans</name>
    <dbReference type="NCBI Taxonomy" id="272558"/>
    <lineage>
        <taxon>Bacteria</taxon>
        <taxon>Bacillati</taxon>
        <taxon>Bacillota</taxon>
        <taxon>Bacilli</taxon>
        <taxon>Bacillales</taxon>
        <taxon>Bacillaceae</taxon>
        <taxon>Halalkalibacterium (ex Joshi et al. 2022)</taxon>
    </lineage>
</organism>
<keyword id="KW-1185">Reference proteome</keyword>